<comment type="function">
    <text evidence="1">Catalyzes the reversible conversion of 3-phosphohydroxypyruvate to phosphoserine and of 3-hydroxy-2-oxo-4-phosphonooxybutanoate to phosphohydroxythreonine.</text>
</comment>
<comment type="catalytic activity">
    <reaction evidence="1">
        <text>O-phospho-L-serine + 2-oxoglutarate = 3-phosphooxypyruvate + L-glutamate</text>
        <dbReference type="Rhea" id="RHEA:14329"/>
        <dbReference type="ChEBI" id="CHEBI:16810"/>
        <dbReference type="ChEBI" id="CHEBI:18110"/>
        <dbReference type="ChEBI" id="CHEBI:29985"/>
        <dbReference type="ChEBI" id="CHEBI:57524"/>
        <dbReference type="EC" id="2.6.1.52"/>
    </reaction>
</comment>
<comment type="catalytic activity">
    <reaction evidence="1">
        <text>4-(phosphooxy)-L-threonine + 2-oxoglutarate = (R)-3-hydroxy-2-oxo-4-phosphooxybutanoate + L-glutamate</text>
        <dbReference type="Rhea" id="RHEA:16573"/>
        <dbReference type="ChEBI" id="CHEBI:16810"/>
        <dbReference type="ChEBI" id="CHEBI:29985"/>
        <dbReference type="ChEBI" id="CHEBI:58452"/>
        <dbReference type="ChEBI" id="CHEBI:58538"/>
        <dbReference type="EC" id="2.6.1.52"/>
    </reaction>
</comment>
<comment type="cofactor">
    <cofactor evidence="1">
        <name>pyridoxal 5'-phosphate</name>
        <dbReference type="ChEBI" id="CHEBI:597326"/>
    </cofactor>
    <text evidence="1">Binds 1 pyridoxal phosphate per subunit.</text>
</comment>
<comment type="pathway">
    <text evidence="1">Amino-acid biosynthesis; L-serine biosynthesis; L-serine from 3-phospho-D-glycerate: step 2/3.</text>
</comment>
<comment type="pathway">
    <text evidence="1">Cofactor biosynthesis; pyridoxine 5'-phosphate biosynthesis; pyridoxine 5'-phosphate from D-erythrose 4-phosphate: step 3/5.</text>
</comment>
<comment type="subunit">
    <text evidence="1">Homodimer.</text>
</comment>
<comment type="subcellular location">
    <subcellularLocation>
        <location evidence="1">Cytoplasm</location>
    </subcellularLocation>
</comment>
<comment type="similarity">
    <text evidence="1">Belongs to the class-V pyridoxal-phosphate-dependent aminotransferase family. SerC subfamily.</text>
</comment>
<protein>
    <recommendedName>
        <fullName evidence="1">Phosphoserine aminotransferase</fullName>
        <ecNumber evidence="1">2.6.1.52</ecNumber>
    </recommendedName>
    <alternativeName>
        <fullName evidence="1">Phosphohydroxythreonine aminotransferase</fullName>
        <shortName evidence="1">PSAT</shortName>
    </alternativeName>
</protein>
<proteinExistence type="inferred from homology"/>
<keyword id="KW-0028">Amino-acid biosynthesis</keyword>
<keyword id="KW-0032">Aminotransferase</keyword>
<keyword id="KW-0963">Cytoplasm</keyword>
<keyword id="KW-0663">Pyridoxal phosphate</keyword>
<keyword id="KW-0664">Pyridoxine biosynthesis</keyword>
<keyword id="KW-1185">Reference proteome</keyword>
<keyword id="KW-0718">Serine biosynthesis</keyword>
<keyword id="KW-0808">Transferase</keyword>
<sequence length="362" mass="40430">MSQVYNFSAGPAMLPAEVLRRAELELCNWHGLGRSVMEISHRSKEFLEVAHQAEQDLRDLLNVPENYKILFCHGGARGHFAALPLNLLGEKTTADYIDGGYWAKSAADEAEKYCSPNIIKIKTEIDGKIAVKPMKEWQLSDNAAYVHYCPNETIDGIAIHEEPDFDDKKIVIADYSSAILSQPLDVSRFGMIYAGAQKNIGPAGLTLVIIREDLLGKARKETPSVFDYTVLAENDSMFNTPPTFAWYLSGMVFKWLKEQGGLQEIAKRNYEKATLLYSAIDNSDFYINRIATENRSLMNVPFQMSSPALDAVFLKEAEEQGLVALKGHRVSGGMRASIYNAMPFAGVQALVDFMADFERRHA</sequence>
<dbReference type="EC" id="2.6.1.52" evidence="1"/>
<dbReference type="EMBL" id="AM942759">
    <property type="protein sequence ID" value="CAR41665.1"/>
    <property type="molecule type" value="Genomic_DNA"/>
</dbReference>
<dbReference type="RefSeq" id="WP_004244582.1">
    <property type="nucleotide sequence ID" value="NC_010554.1"/>
</dbReference>
<dbReference type="SMR" id="B4ET24"/>
<dbReference type="EnsemblBacteria" id="CAR41665">
    <property type="protein sequence ID" value="CAR41665"/>
    <property type="gene ID" value="PMI0711"/>
</dbReference>
<dbReference type="GeneID" id="6801416"/>
<dbReference type="KEGG" id="pmr:PMI0711"/>
<dbReference type="eggNOG" id="COG1932">
    <property type="taxonomic scope" value="Bacteria"/>
</dbReference>
<dbReference type="HOGENOM" id="CLU_034866_0_2_6"/>
<dbReference type="UniPathway" id="UPA00135">
    <property type="reaction ID" value="UER00197"/>
</dbReference>
<dbReference type="UniPathway" id="UPA00244">
    <property type="reaction ID" value="UER00311"/>
</dbReference>
<dbReference type="Proteomes" id="UP000008319">
    <property type="component" value="Chromosome"/>
</dbReference>
<dbReference type="GO" id="GO:0005737">
    <property type="term" value="C:cytoplasm"/>
    <property type="evidence" value="ECO:0007669"/>
    <property type="project" value="UniProtKB-SubCell"/>
</dbReference>
<dbReference type="GO" id="GO:0004648">
    <property type="term" value="F:O-phospho-L-serine:2-oxoglutarate aminotransferase activity"/>
    <property type="evidence" value="ECO:0007669"/>
    <property type="project" value="UniProtKB-UniRule"/>
</dbReference>
<dbReference type="GO" id="GO:0030170">
    <property type="term" value="F:pyridoxal phosphate binding"/>
    <property type="evidence" value="ECO:0007669"/>
    <property type="project" value="UniProtKB-UniRule"/>
</dbReference>
<dbReference type="GO" id="GO:0006564">
    <property type="term" value="P:L-serine biosynthetic process"/>
    <property type="evidence" value="ECO:0007669"/>
    <property type="project" value="UniProtKB-UniRule"/>
</dbReference>
<dbReference type="GO" id="GO:0008615">
    <property type="term" value="P:pyridoxine biosynthetic process"/>
    <property type="evidence" value="ECO:0007669"/>
    <property type="project" value="UniProtKB-UniRule"/>
</dbReference>
<dbReference type="CDD" id="cd00611">
    <property type="entry name" value="PSAT_like"/>
    <property type="match status" value="1"/>
</dbReference>
<dbReference type="FunFam" id="3.40.640.10:FF:000010">
    <property type="entry name" value="Phosphoserine aminotransferase"/>
    <property type="match status" value="1"/>
</dbReference>
<dbReference type="FunFam" id="3.90.1150.10:FF:000006">
    <property type="entry name" value="Phosphoserine aminotransferase"/>
    <property type="match status" value="1"/>
</dbReference>
<dbReference type="Gene3D" id="3.90.1150.10">
    <property type="entry name" value="Aspartate Aminotransferase, domain 1"/>
    <property type="match status" value="1"/>
</dbReference>
<dbReference type="Gene3D" id="3.40.640.10">
    <property type="entry name" value="Type I PLP-dependent aspartate aminotransferase-like (Major domain)"/>
    <property type="match status" value="1"/>
</dbReference>
<dbReference type="HAMAP" id="MF_00160">
    <property type="entry name" value="SerC_aminotrans_5"/>
    <property type="match status" value="1"/>
</dbReference>
<dbReference type="InterPro" id="IPR000192">
    <property type="entry name" value="Aminotrans_V_dom"/>
</dbReference>
<dbReference type="InterPro" id="IPR020578">
    <property type="entry name" value="Aminotrans_V_PyrdxlP_BS"/>
</dbReference>
<dbReference type="InterPro" id="IPR022278">
    <property type="entry name" value="Pser_aminoTfrase"/>
</dbReference>
<dbReference type="InterPro" id="IPR015424">
    <property type="entry name" value="PyrdxlP-dep_Trfase"/>
</dbReference>
<dbReference type="InterPro" id="IPR015421">
    <property type="entry name" value="PyrdxlP-dep_Trfase_major"/>
</dbReference>
<dbReference type="InterPro" id="IPR015422">
    <property type="entry name" value="PyrdxlP-dep_Trfase_small"/>
</dbReference>
<dbReference type="NCBIfam" id="NF003764">
    <property type="entry name" value="PRK05355.1"/>
    <property type="match status" value="1"/>
</dbReference>
<dbReference type="NCBIfam" id="TIGR01364">
    <property type="entry name" value="serC_1"/>
    <property type="match status" value="1"/>
</dbReference>
<dbReference type="PANTHER" id="PTHR43247">
    <property type="entry name" value="PHOSPHOSERINE AMINOTRANSFERASE"/>
    <property type="match status" value="1"/>
</dbReference>
<dbReference type="PANTHER" id="PTHR43247:SF1">
    <property type="entry name" value="PHOSPHOSERINE AMINOTRANSFERASE"/>
    <property type="match status" value="1"/>
</dbReference>
<dbReference type="Pfam" id="PF00266">
    <property type="entry name" value="Aminotran_5"/>
    <property type="match status" value="1"/>
</dbReference>
<dbReference type="PIRSF" id="PIRSF000525">
    <property type="entry name" value="SerC"/>
    <property type="match status" value="1"/>
</dbReference>
<dbReference type="SUPFAM" id="SSF53383">
    <property type="entry name" value="PLP-dependent transferases"/>
    <property type="match status" value="1"/>
</dbReference>
<dbReference type="PROSITE" id="PS00595">
    <property type="entry name" value="AA_TRANSFER_CLASS_5"/>
    <property type="match status" value="1"/>
</dbReference>
<gene>
    <name evidence="1" type="primary">serC</name>
    <name type="ordered locus">PMI0711</name>
</gene>
<evidence type="ECO:0000255" key="1">
    <source>
        <dbReference type="HAMAP-Rule" id="MF_00160"/>
    </source>
</evidence>
<name>SERC_PROMH</name>
<reference key="1">
    <citation type="journal article" date="2008" name="J. Bacteriol.">
        <title>Complete genome sequence of uropathogenic Proteus mirabilis, a master of both adherence and motility.</title>
        <authorList>
            <person name="Pearson M.M."/>
            <person name="Sebaihia M."/>
            <person name="Churcher C."/>
            <person name="Quail M.A."/>
            <person name="Seshasayee A.S."/>
            <person name="Luscombe N.M."/>
            <person name="Abdellah Z."/>
            <person name="Arrosmith C."/>
            <person name="Atkin B."/>
            <person name="Chillingworth T."/>
            <person name="Hauser H."/>
            <person name="Jagels K."/>
            <person name="Moule S."/>
            <person name="Mungall K."/>
            <person name="Norbertczak H."/>
            <person name="Rabbinowitsch E."/>
            <person name="Walker D."/>
            <person name="Whithead S."/>
            <person name="Thomson N.R."/>
            <person name="Rather P.N."/>
            <person name="Parkhill J."/>
            <person name="Mobley H.L.T."/>
        </authorList>
    </citation>
    <scope>NUCLEOTIDE SEQUENCE [LARGE SCALE GENOMIC DNA]</scope>
    <source>
        <strain>HI4320</strain>
    </source>
</reference>
<organism>
    <name type="scientific">Proteus mirabilis (strain HI4320)</name>
    <dbReference type="NCBI Taxonomy" id="529507"/>
    <lineage>
        <taxon>Bacteria</taxon>
        <taxon>Pseudomonadati</taxon>
        <taxon>Pseudomonadota</taxon>
        <taxon>Gammaproteobacteria</taxon>
        <taxon>Enterobacterales</taxon>
        <taxon>Morganellaceae</taxon>
        <taxon>Proteus</taxon>
    </lineage>
</organism>
<feature type="chain" id="PRO_1000203547" description="Phosphoserine aminotransferase">
    <location>
        <begin position="1"/>
        <end position="362"/>
    </location>
</feature>
<feature type="binding site" evidence="1">
    <location>
        <position position="42"/>
    </location>
    <ligand>
        <name>L-glutamate</name>
        <dbReference type="ChEBI" id="CHEBI:29985"/>
    </ligand>
</feature>
<feature type="binding site" evidence="1">
    <location>
        <begin position="76"/>
        <end position="77"/>
    </location>
    <ligand>
        <name>pyridoxal 5'-phosphate</name>
        <dbReference type="ChEBI" id="CHEBI:597326"/>
    </ligand>
</feature>
<feature type="binding site" evidence="1">
    <location>
        <position position="102"/>
    </location>
    <ligand>
        <name>pyridoxal 5'-phosphate</name>
        <dbReference type="ChEBI" id="CHEBI:597326"/>
    </ligand>
</feature>
<feature type="binding site" evidence="1">
    <location>
        <position position="153"/>
    </location>
    <ligand>
        <name>pyridoxal 5'-phosphate</name>
        <dbReference type="ChEBI" id="CHEBI:597326"/>
    </ligand>
</feature>
<feature type="binding site" evidence="1">
    <location>
        <position position="174"/>
    </location>
    <ligand>
        <name>pyridoxal 5'-phosphate</name>
        <dbReference type="ChEBI" id="CHEBI:597326"/>
    </ligand>
</feature>
<feature type="binding site" evidence="1">
    <location>
        <position position="197"/>
    </location>
    <ligand>
        <name>pyridoxal 5'-phosphate</name>
        <dbReference type="ChEBI" id="CHEBI:597326"/>
    </ligand>
</feature>
<feature type="binding site" evidence="1">
    <location>
        <begin position="239"/>
        <end position="240"/>
    </location>
    <ligand>
        <name>pyridoxal 5'-phosphate</name>
        <dbReference type="ChEBI" id="CHEBI:597326"/>
    </ligand>
</feature>
<feature type="modified residue" description="N6-(pyridoxal phosphate)lysine" evidence="1">
    <location>
        <position position="198"/>
    </location>
</feature>
<accession>B4ET24</accession>